<name>UVR3_ARATH</name>
<accession>O48652</accession>
<accession>Q2V3V6</accession>
<sequence length="556" mass="63790">MQRFCVCSPSSYRLNPITSMATGSGSLIWFRKGLRVHDNPALEYASKGSEFMYPVFVIDPHYMESDPSAFSPGSSRAGVNRIRFLLESLKDLDSSLKKLGSRLLVFKGEPGEVLVRCLQEWKVKRLCFEYDTDPYYQALDVKVKDYASSTGVEVFSPVSHTLFNPAHIIEKNGGKPPLSYQSFLKVAGEPSCAKSELVMSYSSLPPIGDIGNLGISEVPSLEELGYKDDEQADWTPFRGGESEALKRLTKSISDKAWVANFEKPKGDPSAFLKPATTVMSPYLKFGCLSSRYFYQCLQNIYKDVKKHTSPPVSLLGQLLWREFFYTTAFGTPNFDKMKGNRICKQIPWNEDHAMLAAWRDGKTGYPWIDAIMVQLLKWGWMHHLARHCVACFLTRGDLFIHWEQGRDVFERLLIDSDWAINNGNWMWLSCSSFFYQFNRIYSPISFGKKYDPDGKYIRHFLPVLKDMPKQYIYEPWTAPLSVQTKANCIVGKDYPKPMVLHDSASKECKRKMGEAYALNKKMDGKVDEENLRDLRRKLQKDEHEESKIRNQRPKLK</sequence>
<protein>
    <recommendedName>
        <fullName>(6-4)DNA photolyase</fullName>
        <ecNumber>4.1.99.13</ecNumber>
    </recommendedName>
    <alternativeName>
        <fullName>Protein UV repair defective 3</fullName>
    </alternativeName>
</protein>
<evidence type="ECO:0000250" key="1"/>
<evidence type="ECO:0000256" key="2">
    <source>
        <dbReference type="SAM" id="MobiDB-lite"/>
    </source>
</evidence>
<evidence type="ECO:0000269" key="3">
    <source>
    </source>
</evidence>
<evidence type="ECO:0000269" key="4">
    <source>
    </source>
</evidence>
<evidence type="ECO:0000269" key="5">
    <source>
    </source>
</evidence>
<evidence type="ECO:0000269" key="6">
    <source>
    </source>
</evidence>
<evidence type="ECO:0000305" key="7"/>
<evidence type="ECO:0007829" key="8">
    <source>
        <dbReference type="PDB" id="3FY4"/>
    </source>
</evidence>
<keyword id="KW-0002">3D-structure</keyword>
<keyword id="KW-0025">Alternative splicing</keyword>
<keyword id="KW-0227">DNA damage</keyword>
<keyword id="KW-0234">DNA repair</keyword>
<keyword id="KW-0238">DNA-binding</keyword>
<keyword id="KW-0274">FAD</keyword>
<keyword id="KW-0285">Flavoprotein</keyword>
<keyword id="KW-0456">Lyase</keyword>
<keyword id="KW-0547">Nucleotide-binding</keyword>
<keyword id="KW-1185">Reference proteome</keyword>
<feature type="chain" id="PRO_0000397886" description="(6-4)DNA photolyase">
    <location>
        <begin position="1"/>
        <end position="556"/>
    </location>
</feature>
<feature type="domain" description="Photolyase/cryptochrome alpha/beta">
    <location>
        <begin position="24"/>
        <end position="162"/>
    </location>
</feature>
<feature type="region of interest" description="Interaction with DNA" evidence="1">
    <location>
        <begin position="382"/>
        <end position="387"/>
    </location>
</feature>
<feature type="region of interest" description="Disordered" evidence="2">
    <location>
        <begin position="534"/>
        <end position="556"/>
    </location>
</feature>
<feature type="compositionally biased region" description="Basic and acidic residues" evidence="2">
    <location>
        <begin position="539"/>
        <end position="548"/>
    </location>
</feature>
<feature type="binding site">
    <location>
        <position position="262"/>
    </location>
    <ligand>
        <name>phosphate</name>
        <dbReference type="ChEBI" id="CHEBI:43474"/>
    </ligand>
</feature>
<feature type="binding site" evidence="5">
    <location>
        <position position="263"/>
    </location>
    <ligand>
        <name>FAD</name>
        <dbReference type="ChEBI" id="CHEBI:57692"/>
    </ligand>
</feature>
<feature type="binding site" evidence="5">
    <location>
        <begin position="276"/>
        <end position="280"/>
    </location>
    <ligand>
        <name>FAD</name>
        <dbReference type="ChEBI" id="CHEBI:57692"/>
    </ligand>
</feature>
<feature type="binding site" evidence="5">
    <location>
        <begin position="317"/>
        <end position="321"/>
    </location>
    <ligand>
        <name>FAD</name>
        <dbReference type="ChEBI" id="CHEBI:57692"/>
    </ligand>
</feature>
<feature type="binding site" evidence="1">
    <location>
        <position position="320"/>
    </location>
    <ligand>
        <name>DNA</name>
        <dbReference type="ChEBI" id="CHEBI:16991"/>
    </ligand>
</feature>
<feature type="binding site" evidence="5">
    <location>
        <begin position="380"/>
        <end position="383"/>
    </location>
    <ligand>
        <name>FAD</name>
        <dbReference type="ChEBI" id="CHEBI:57692"/>
    </ligand>
</feature>
<feature type="binding site" evidence="5">
    <location>
        <position position="386"/>
    </location>
    <ligand>
        <name>FAD</name>
        <dbReference type="ChEBI" id="CHEBI:57692"/>
    </ligand>
</feature>
<feature type="binding site" evidence="5">
    <location>
        <begin position="415"/>
        <end position="417"/>
    </location>
    <ligand>
        <name>FAD</name>
        <dbReference type="ChEBI" id="CHEBI:57692"/>
    </ligand>
</feature>
<feature type="binding site" evidence="5">
    <location>
        <position position="421"/>
    </location>
    <ligand>
        <name>FAD</name>
        <dbReference type="ChEBI" id="CHEBI:57692"/>
    </ligand>
</feature>
<feature type="binding site" evidence="1">
    <location>
        <position position="427"/>
    </location>
    <ligand>
        <name>DNA</name>
        <dbReference type="ChEBI" id="CHEBI:16991"/>
    </ligand>
</feature>
<feature type="site" description="Electron transfer via tryptophanyl radical" evidence="1">
    <location>
        <position position="348"/>
    </location>
</feature>
<feature type="site" description="Electron transfer via tryptophanyl radical" evidence="1">
    <location>
        <position position="402"/>
    </location>
</feature>
<feature type="site" description="Electron transfer via tryptophanyl radical" evidence="1">
    <location>
        <position position="425"/>
    </location>
</feature>
<feature type="splice variant" id="VSP_039720" description="In isoform 2." evidence="7">
    <original>FNRIYSPIS</original>
    <variation>ALSPFCFSF</variation>
    <location>
        <begin position="437"/>
        <end position="445"/>
    </location>
</feature>
<feature type="splice variant" id="VSP_039721" description="In isoform 2." evidence="7">
    <location>
        <begin position="446"/>
        <end position="556"/>
    </location>
</feature>
<feature type="mutagenesis site" description="No effect on DNA repair activity." evidence="5">
    <original>K</original>
    <variation>R</variation>
    <location>
        <position position="263"/>
    </location>
</feature>
<feature type="mutagenesis site" description="No effect on DNA repair activity." evidence="5">
    <original>T</original>
    <variation>P</variation>
    <location>
        <position position="276"/>
    </location>
</feature>
<feature type="mutagenesis site" description="Loss of DNA repair activity." evidence="5">
    <original>H</original>
    <variation>A</variation>
    <location>
        <position position="383"/>
    </location>
</feature>
<feature type="mutagenesis site" description="Loss of DNA repair activity." evidence="5">
    <original>H</original>
    <variation>A</variation>
    <location>
        <position position="387"/>
    </location>
</feature>
<feature type="mutagenesis site" description="No effect on DNA repair activity." evidence="5">
    <original>R</original>
    <variation>H</variation>
    <variation>A</variation>
    <location>
        <position position="439"/>
    </location>
</feature>
<feature type="strand" evidence="8">
    <location>
        <begin position="25"/>
        <end position="32"/>
    </location>
</feature>
<feature type="helix" evidence="8">
    <location>
        <begin position="40"/>
        <end position="46"/>
    </location>
</feature>
<feature type="strand" evidence="8">
    <location>
        <begin position="52"/>
        <end position="58"/>
    </location>
</feature>
<feature type="helix" evidence="8">
    <location>
        <begin position="60"/>
        <end position="63"/>
    </location>
</feature>
<feature type="strand" evidence="8">
    <location>
        <begin position="69"/>
        <end position="73"/>
    </location>
</feature>
<feature type="helix" evidence="8">
    <location>
        <begin position="79"/>
        <end position="98"/>
    </location>
</feature>
<feature type="strand" evidence="8">
    <location>
        <begin position="104"/>
        <end position="108"/>
    </location>
</feature>
<feature type="helix" evidence="8">
    <location>
        <begin position="110"/>
        <end position="118"/>
    </location>
</feature>
<feature type="strand" evidence="8">
    <location>
        <begin position="123"/>
        <end position="128"/>
    </location>
</feature>
<feature type="helix" evidence="8">
    <location>
        <begin position="134"/>
        <end position="149"/>
    </location>
</feature>
<feature type="strand" evidence="8">
    <location>
        <begin position="153"/>
        <end position="155"/>
    </location>
</feature>
<feature type="strand" evidence="8">
    <location>
        <begin position="160"/>
        <end position="163"/>
    </location>
</feature>
<feature type="helix" evidence="8">
    <location>
        <begin position="165"/>
        <end position="171"/>
    </location>
</feature>
<feature type="strand" evidence="8">
    <location>
        <begin position="173"/>
        <end position="175"/>
    </location>
</feature>
<feature type="helix" evidence="8">
    <location>
        <begin position="180"/>
        <end position="187"/>
    </location>
</feature>
<feature type="turn" evidence="8">
    <location>
        <begin position="191"/>
        <end position="194"/>
    </location>
</feature>
<feature type="turn" evidence="8">
    <location>
        <begin position="221"/>
        <end position="225"/>
    </location>
</feature>
<feature type="helix" evidence="8">
    <location>
        <begin position="228"/>
        <end position="230"/>
    </location>
</feature>
<feature type="helix" evidence="8">
    <location>
        <begin position="241"/>
        <end position="251"/>
    </location>
</feature>
<feature type="helix" evidence="8">
    <location>
        <begin position="255"/>
        <end position="259"/>
    </location>
</feature>
<feature type="helix" evidence="8">
    <location>
        <begin position="263"/>
        <end position="265"/>
    </location>
</feature>
<feature type="helix" evidence="8">
    <location>
        <begin position="280"/>
        <end position="284"/>
    </location>
</feature>
<feature type="helix" evidence="8">
    <location>
        <begin position="290"/>
        <end position="302"/>
    </location>
</feature>
<feature type="turn" evidence="8">
    <location>
        <begin position="310"/>
        <end position="312"/>
    </location>
</feature>
<feature type="helix" evidence="8">
    <location>
        <begin position="314"/>
        <end position="329"/>
    </location>
</feature>
<feature type="turn" evidence="8">
    <location>
        <begin position="332"/>
        <end position="335"/>
    </location>
</feature>
<feature type="helix" evidence="8">
    <location>
        <begin position="352"/>
        <end position="359"/>
    </location>
</feature>
<feature type="helix" evidence="8">
    <location>
        <begin position="366"/>
        <end position="378"/>
    </location>
</feature>
<feature type="helix" evidence="8">
    <location>
        <begin position="383"/>
        <end position="393"/>
    </location>
</feature>
<feature type="turn" evidence="8">
    <location>
        <begin position="394"/>
        <end position="398"/>
    </location>
</feature>
<feature type="helix" evidence="8">
    <location>
        <begin position="402"/>
        <end position="412"/>
    </location>
</feature>
<feature type="helix" evidence="8">
    <location>
        <begin position="418"/>
        <end position="428"/>
    </location>
</feature>
<feature type="strand" evidence="8">
    <location>
        <begin position="431"/>
        <end position="433"/>
    </location>
</feature>
<feature type="turn" evidence="8">
    <location>
        <begin position="443"/>
        <end position="446"/>
    </location>
</feature>
<feature type="helix" evidence="8">
    <location>
        <begin position="447"/>
        <end position="449"/>
    </location>
</feature>
<feature type="helix" evidence="8">
    <location>
        <begin position="455"/>
        <end position="460"/>
    </location>
</feature>
<feature type="helix" evidence="8">
    <location>
        <begin position="462"/>
        <end position="464"/>
    </location>
</feature>
<feature type="turn" evidence="8">
    <location>
        <begin position="469"/>
        <end position="473"/>
    </location>
</feature>
<feature type="helix" evidence="8">
    <location>
        <begin position="475"/>
        <end position="477"/>
    </location>
</feature>
<feature type="helix" evidence="8">
    <location>
        <begin position="480"/>
        <end position="486"/>
    </location>
</feature>
<feature type="turn" evidence="8">
    <location>
        <begin position="490"/>
        <end position="492"/>
    </location>
</feature>
<feature type="helix" evidence="8">
    <location>
        <begin position="501"/>
        <end position="521"/>
    </location>
</feature>
<feature type="turn" evidence="8">
    <location>
        <begin position="522"/>
        <end position="524"/>
    </location>
</feature>
<feature type="helix" evidence="8">
    <location>
        <begin position="528"/>
        <end position="541"/>
    </location>
</feature>
<dbReference type="EC" id="4.1.99.13"/>
<dbReference type="EMBL" id="AB003687">
    <property type="protein sequence ID" value="BAA24449.1"/>
    <property type="status" value="ALT_INIT"/>
    <property type="molecule type" value="mRNA"/>
</dbReference>
<dbReference type="EMBL" id="AB017331">
    <property type="protein sequence ID" value="BAA34711.1"/>
    <property type="status" value="ALT_INIT"/>
    <property type="molecule type" value="Genomic_DNA"/>
</dbReference>
<dbReference type="EMBL" id="AB017071">
    <property type="protein sequence ID" value="BAB02293.1"/>
    <property type="molecule type" value="Genomic_DNA"/>
</dbReference>
<dbReference type="EMBL" id="CP002686">
    <property type="protein sequence ID" value="AEE75703.1"/>
    <property type="molecule type" value="Genomic_DNA"/>
</dbReference>
<dbReference type="EMBL" id="CP002686">
    <property type="protein sequence ID" value="AEE75704.1"/>
    <property type="molecule type" value="Genomic_DNA"/>
</dbReference>
<dbReference type="RefSeq" id="NP_001030703.1">
    <molecule id="O48652-2"/>
    <property type="nucleotide sequence ID" value="NM_001035626.2"/>
</dbReference>
<dbReference type="RefSeq" id="NP_566520.1">
    <molecule id="O48652-1"/>
    <property type="nucleotide sequence ID" value="NM_112432.2"/>
</dbReference>
<dbReference type="PDB" id="3FY4">
    <property type="method" value="X-ray"/>
    <property type="resolution" value="2.70 A"/>
    <property type="chains" value="A/B/C=20-556"/>
</dbReference>
<dbReference type="PDBsum" id="3FY4"/>
<dbReference type="SMR" id="O48652"/>
<dbReference type="FunCoup" id="O48652">
    <property type="interactions" value="2114"/>
</dbReference>
<dbReference type="STRING" id="3702.O48652"/>
<dbReference type="PaxDb" id="3702-AT3G15620.1"/>
<dbReference type="ProteomicsDB" id="228566">
    <molecule id="O48652-1"/>
</dbReference>
<dbReference type="EnsemblPlants" id="AT3G15620.1">
    <molecule id="O48652-1"/>
    <property type="protein sequence ID" value="AT3G15620.1"/>
    <property type="gene ID" value="AT3G15620"/>
</dbReference>
<dbReference type="EnsemblPlants" id="AT3G15620.2">
    <molecule id="O48652-2"/>
    <property type="protein sequence ID" value="AT3G15620.2"/>
    <property type="gene ID" value="AT3G15620"/>
</dbReference>
<dbReference type="GeneID" id="820804"/>
<dbReference type="Gramene" id="AT3G15620.1">
    <molecule id="O48652-1"/>
    <property type="protein sequence ID" value="AT3G15620.1"/>
    <property type="gene ID" value="AT3G15620"/>
</dbReference>
<dbReference type="Gramene" id="AT3G15620.2">
    <molecule id="O48652-2"/>
    <property type="protein sequence ID" value="AT3G15620.2"/>
    <property type="gene ID" value="AT3G15620"/>
</dbReference>
<dbReference type="KEGG" id="ath:AT3G15620"/>
<dbReference type="Araport" id="AT3G15620"/>
<dbReference type="TAIR" id="AT3G15620">
    <property type="gene designation" value="UVR3"/>
</dbReference>
<dbReference type="eggNOG" id="KOG0133">
    <property type="taxonomic scope" value="Eukaryota"/>
</dbReference>
<dbReference type="HOGENOM" id="CLU_010348_3_4_1"/>
<dbReference type="InParanoid" id="O48652"/>
<dbReference type="OMA" id="YTVFTPY"/>
<dbReference type="PhylomeDB" id="O48652"/>
<dbReference type="BioCyc" id="MetaCyc:MONOMER-15021"/>
<dbReference type="BRENDA" id="4.1.99.13">
    <property type="organism ID" value="399"/>
</dbReference>
<dbReference type="EvolutionaryTrace" id="O48652"/>
<dbReference type="PRO" id="PR:O48652"/>
<dbReference type="Proteomes" id="UP000006548">
    <property type="component" value="Chromosome 3"/>
</dbReference>
<dbReference type="ExpressionAtlas" id="O48652">
    <property type="expression patterns" value="baseline and differential"/>
</dbReference>
<dbReference type="GO" id="GO:0003914">
    <property type="term" value="F:DNA (6-4) photolyase activity"/>
    <property type="evidence" value="ECO:0000314"/>
    <property type="project" value="TAIR"/>
</dbReference>
<dbReference type="GO" id="GO:0003677">
    <property type="term" value="F:DNA binding"/>
    <property type="evidence" value="ECO:0007669"/>
    <property type="project" value="UniProtKB-KW"/>
</dbReference>
<dbReference type="GO" id="GO:0000166">
    <property type="term" value="F:nucleotide binding"/>
    <property type="evidence" value="ECO:0007669"/>
    <property type="project" value="UniProtKB-KW"/>
</dbReference>
<dbReference type="GO" id="GO:0006290">
    <property type="term" value="P:pyrimidine dimer repair"/>
    <property type="evidence" value="ECO:0000315"/>
    <property type="project" value="TAIR"/>
</dbReference>
<dbReference type="GO" id="GO:0009411">
    <property type="term" value="P:response to UV"/>
    <property type="evidence" value="ECO:0000315"/>
    <property type="project" value="TAIR"/>
</dbReference>
<dbReference type="FunFam" id="3.40.50.620:FF:000278">
    <property type="entry name" value="(6-4)DNA photolyase"/>
    <property type="match status" value="1"/>
</dbReference>
<dbReference type="FunFam" id="1.10.579.10:FF:000004">
    <property type="entry name" value="Cryptochrome-1"/>
    <property type="match status" value="1"/>
</dbReference>
<dbReference type="Gene3D" id="1.25.40.80">
    <property type="match status" value="1"/>
</dbReference>
<dbReference type="Gene3D" id="1.10.579.10">
    <property type="entry name" value="DNA Cyclobutane Dipyrimidine Photolyase, subunit A, domain 3"/>
    <property type="match status" value="1"/>
</dbReference>
<dbReference type="Gene3D" id="3.40.50.620">
    <property type="entry name" value="HUPs"/>
    <property type="match status" value="1"/>
</dbReference>
<dbReference type="InterPro" id="IPR036134">
    <property type="entry name" value="Crypto/Photolyase_FAD-like_sf"/>
</dbReference>
<dbReference type="InterPro" id="IPR036155">
    <property type="entry name" value="Crypto/Photolyase_N_sf"/>
</dbReference>
<dbReference type="InterPro" id="IPR005101">
    <property type="entry name" value="Cryptochr/Photolyase_FAD-bd"/>
</dbReference>
<dbReference type="InterPro" id="IPR002081">
    <property type="entry name" value="Cryptochrome/DNA_photolyase_1"/>
</dbReference>
<dbReference type="InterPro" id="IPR006050">
    <property type="entry name" value="DNA_photolyase_N"/>
</dbReference>
<dbReference type="InterPro" id="IPR014729">
    <property type="entry name" value="Rossmann-like_a/b/a_fold"/>
</dbReference>
<dbReference type="PANTHER" id="PTHR11455">
    <property type="entry name" value="CRYPTOCHROME"/>
    <property type="match status" value="1"/>
</dbReference>
<dbReference type="PANTHER" id="PTHR11455:SF9">
    <property type="entry name" value="CRYPTOCHROME CIRCADIAN CLOCK 5 ISOFORM X1"/>
    <property type="match status" value="1"/>
</dbReference>
<dbReference type="Pfam" id="PF00875">
    <property type="entry name" value="DNA_photolyase"/>
    <property type="match status" value="1"/>
</dbReference>
<dbReference type="Pfam" id="PF03441">
    <property type="entry name" value="FAD_binding_7"/>
    <property type="match status" value="1"/>
</dbReference>
<dbReference type="SUPFAM" id="SSF48173">
    <property type="entry name" value="Cryptochrome/photolyase FAD-binding domain"/>
    <property type="match status" value="1"/>
</dbReference>
<dbReference type="SUPFAM" id="SSF52425">
    <property type="entry name" value="Cryptochrome/photolyase, N-terminal domain"/>
    <property type="match status" value="1"/>
</dbReference>
<dbReference type="PROSITE" id="PS51645">
    <property type="entry name" value="PHR_CRY_ALPHA_BETA"/>
    <property type="match status" value="1"/>
</dbReference>
<proteinExistence type="evidence at protein level"/>
<reference key="1">
    <citation type="journal article" date="1998" name="Nucleic Acids Res.">
        <title>Cloning and characterization of a gene (UVR3) required for photorepair of 6-4 photoproducts in Arabidopsis thaliana.</title>
        <authorList>
            <person name="Nakajima S."/>
            <person name="Sugiyama M."/>
            <person name="Iwai S."/>
            <person name="Hitomi K."/>
            <person name="Otoshi E."/>
            <person name="Kim S.T."/>
            <person name="Jiang C.Z."/>
            <person name="Todo T."/>
            <person name="Britt A.B."/>
            <person name="Yamamoto K."/>
        </authorList>
    </citation>
    <scope>NUCLEOTIDE SEQUENCE [MRNA]</scope>
    <scope>FUNCTION</scope>
    <scope>COFACTOR</scope>
    <source>
        <strain>cv. Landsberg erecta</strain>
    </source>
</reference>
<reference key="2">
    <citation type="online journal article" date="1998" name="Plant Gene Register">
        <title>The genomic organization of the Arabidopsis 6-4 photolyase gene.</title>
        <authorList>
            <person name="Sakamoto A."/>
            <person name="Tanaka A."/>
            <person name="Tano S."/>
            <person name="Nakajima S."/>
            <person name="Yamamoto K."/>
            <person name="Watanabe H."/>
        </authorList>
        <locator>PGR98-180</locator>
    </citation>
    <scope>NUCLEOTIDE SEQUENCE [GENOMIC DNA]</scope>
    <source>
        <strain>cv. Columbia</strain>
    </source>
</reference>
<reference key="3">
    <citation type="journal article" date="2000" name="DNA Res.">
        <title>Structural analysis of Arabidopsis thaliana chromosome 3. I. Sequence features of the regions of 4,504,864 bp covered by sixty P1 and TAC clones.</title>
        <authorList>
            <person name="Sato S."/>
            <person name="Nakamura Y."/>
            <person name="Kaneko T."/>
            <person name="Katoh T."/>
            <person name="Asamizu E."/>
            <person name="Tabata S."/>
        </authorList>
    </citation>
    <scope>NUCLEOTIDE SEQUENCE [LARGE SCALE GENOMIC DNA]</scope>
    <source>
        <strain>cv. Columbia</strain>
    </source>
</reference>
<reference key="4">
    <citation type="journal article" date="2017" name="Plant J.">
        <title>Araport11: a complete reannotation of the Arabidopsis thaliana reference genome.</title>
        <authorList>
            <person name="Cheng C.Y."/>
            <person name="Krishnakumar V."/>
            <person name="Chan A.P."/>
            <person name="Thibaud-Nissen F."/>
            <person name="Schobel S."/>
            <person name="Town C.D."/>
        </authorList>
    </citation>
    <scope>GENOME REANNOTATION</scope>
    <source>
        <strain>cv. Columbia</strain>
    </source>
</reference>
<reference key="5">
    <citation type="journal article" date="2002" name="J. Exp. Bot.">
        <title>Characterization of Arabidopsis photolyase enzymes and analysis of their role in protection from ultraviolet-B radiation.</title>
        <authorList>
            <person name="Waterworth W.M."/>
            <person name="Jiang Q."/>
            <person name="West C.E."/>
            <person name="Nikaido M."/>
            <person name="Bray C.M."/>
        </authorList>
    </citation>
    <scope>TISSUE SPECIFICITY</scope>
    <scope>DEVELOPMENTAL STAGE</scope>
    <scope>INDUCTION BY LIGHT</scope>
</reference>
<reference key="6">
    <citation type="journal article" date="2007" name="J. Biol. Chem.">
        <title>Electron nuclear double resonance differentiates complementary roles for active site histidines in (6-4) photolyase.</title>
        <authorList>
            <person name="Schleicher E."/>
            <person name="Hitomi K."/>
            <person name="Kay C.W."/>
            <person name="Getzoff E.D."/>
            <person name="Todo T."/>
            <person name="Weber S."/>
        </authorList>
    </citation>
    <scope>FUNCTION</scope>
</reference>
<reference key="7">
    <citation type="journal article" date="2009" name="Proc. Natl. Acad. Sci. U.S.A.">
        <title>Functional motifs in the (6-4) photolyase crystal structure make a comparative framework for DNA repair photolyases and clock cryptochromes.</title>
        <authorList>
            <person name="Hitomi K."/>
            <person name="DiTacchio L."/>
            <person name="Arvai A.S."/>
            <person name="Yamamoto J."/>
            <person name="Kim S.T."/>
            <person name="Todo T."/>
            <person name="Tainer J.A."/>
            <person name="Iwai S."/>
            <person name="Panda S."/>
            <person name="Getzoff E.D."/>
        </authorList>
    </citation>
    <scope>X-RAY CRYSTALLOGRAPHY (2.7 ANGSTROMS) IN COMPLEX WITH FAD</scope>
    <scope>MUTAGENESIS OF LYS-263; THR-276; HIS-383; HIS-387 AND ARG-439</scope>
</reference>
<comment type="function">
    <text evidence="4 6">Involved in repair of UV radiation-induced DNA damage. Catalyzes the photoreactivation of pyrimidine [6-4] pyrimidone photoproduct (6-4 products). Binds specifically to DNA containing 6-4 products and repairs these lesions in a visible light-dependent manner. Not required for repair of cyclobutane pyrimidine dimer (CPD).</text>
</comment>
<comment type="catalytic activity">
    <reaction>
        <text>(6-4) photoproduct (in DNA) = 2 pyrimidine residues (in DNA).</text>
        <dbReference type="EC" id="4.1.99.13"/>
    </reaction>
</comment>
<comment type="cofactor">
    <cofactor evidence="6">
        <name>FAD</name>
        <dbReference type="ChEBI" id="CHEBI:57692"/>
    </cofactor>
    <text evidence="6">Binds 1 FAD per subunit.</text>
</comment>
<comment type="alternative products">
    <event type="alternative splicing"/>
    <isoform>
        <id>O48652-1</id>
        <name>1</name>
        <sequence type="displayed"/>
    </isoform>
    <isoform>
        <id>O48652-2</id>
        <name>2</name>
        <sequence type="described" ref="VSP_039720 VSP_039721"/>
    </isoform>
</comment>
<comment type="tissue specificity">
    <text evidence="3">Expressed in siliques, flowers and leaves. Not detected in roots.</text>
</comment>
<comment type="developmental stage">
    <text evidence="3">Expressed at all developmental stages.</text>
</comment>
<comment type="induction">
    <text evidence="3">Not induced by white or UV-B light.</text>
</comment>
<comment type="similarity">
    <text evidence="7">Belongs to the DNA photolyase class-1 family.</text>
</comment>
<comment type="sequence caution" evidence="7">
    <conflict type="erroneous initiation">
        <sequence resource="EMBL-CDS" id="BAA24449"/>
    </conflict>
    <text>Truncated N-terminus.</text>
</comment>
<comment type="sequence caution" evidence="7">
    <conflict type="erroneous initiation">
        <sequence resource="EMBL-CDS" id="BAA34711"/>
    </conflict>
    <text>Truncated N-terminus.</text>
</comment>
<organism>
    <name type="scientific">Arabidopsis thaliana</name>
    <name type="common">Mouse-ear cress</name>
    <dbReference type="NCBI Taxonomy" id="3702"/>
    <lineage>
        <taxon>Eukaryota</taxon>
        <taxon>Viridiplantae</taxon>
        <taxon>Streptophyta</taxon>
        <taxon>Embryophyta</taxon>
        <taxon>Tracheophyta</taxon>
        <taxon>Spermatophyta</taxon>
        <taxon>Magnoliopsida</taxon>
        <taxon>eudicotyledons</taxon>
        <taxon>Gunneridae</taxon>
        <taxon>Pentapetalae</taxon>
        <taxon>rosids</taxon>
        <taxon>malvids</taxon>
        <taxon>Brassicales</taxon>
        <taxon>Brassicaceae</taxon>
        <taxon>Camelineae</taxon>
        <taxon>Arabidopsis</taxon>
    </lineage>
</organism>
<gene>
    <name type="primary">UVR3</name>
    <name type="ordered locus">At3g15620</name>
    <name type="ORF">SJ11.2</name>
</gene>